<comment type="function">
    <text>Hydrolyzes a variety of proteins.</text>
</comment>
<comment type="catalytic activity">
    <reaction>
        <text>More restricted specificity than pepsin A, but shows preferential cleavage at Tyr-|-Xaa bonds. High activity on hemoglobin.</text>
        <dbReference type="EC" id="3.4.23.3"/>
    </reaction>
</comment>
<comment type="subcellular location">
    <subcellularLocation>
        <location>Secreted</location>
    </subcellularLocation>
</comment>
<comment type="similarity">
    <text evidence="2">Belongs to the peptidase A1 family.</text>
</comment>
<name>PEPC_PIG</name>
<organism>
    <name type="scientific">Sus scrofa</name>
    <name type="common">Pig</name>
    <dbReference type="NCBI Taxonomy" id="9823"/>
    <lineage>
        <taxon>Eukaryota</taxon>
        <taxon>Metazoa</taxon>
        <taxon>Chordata</taxon>
        <taxon>Craniata</taxon>
        <taxon>Vertebrata</taxon>
        <taxon>Euteleostomi</taxon>
        <taxon>Mammalia</taxon>
        <taxon>Eutheria</taxon>
        <taxon>Laurasiatheria</taxon>
        <taxon>Artiodactyla</taxon>
        <taxon>Suina</taxon>
        <taxon>Suidae</taxon>
        <taxon>Sus</taxon>
    </lineage>
</organism>
<sequence>SVIKVPLKKLKSIRQAMKEKGLLEEFLKTHKYDPAQRYRIGDISVALEPMAYLEAAYFGEISIGTPPQNFLVL</sequence>
<dbReference type="EC" id="3.4.23.3"/>
<dbReference type="PIR" id="S21754">
    <property type="entry name" value="S21754"/>
</dbReference>
<dbReference type="SMR" id="P30879"/>
<dbReference type="STRING" id="9823.ENSSSCP00000033353"/>
<dbReference type="MEROPS" id="A01.057"/>
<dbReference type="PaxDb" id="9823-ENSSSCP00000001761"/>
<dbReference type="eggNOG" id="KOG1339">
    <property type="taxonomic scope" value="Eukaryota"/>
</dbReference>
<dbReference type="InParanoid" id="P30879"/>
<dbReference type="Proteomes" id="UP000008227">
    <property type="component" value="Unplaced"/>
</dbReference>
<dbReference type="Proteomes" id="UP000314985">
    <property type="component" value="Unplaced"/>
</dbReference>
<dbReference type="Proteomes" id="UP000694570">
    <property type="component" value="Unplaced"/>
</dbReference>
<dbReference type="Proteomes" id="UP000694571">
    <property type="component" value="Unplaced"/>
</dbReference>
<dbReference type="Proteomes" id="UP000694720">
    <property type="component" value="Unplaced"/>
</dbReference>
<dbReference type="Proteomes" id="UP000694722">
    <property type="component" value="Unplaced"/>
</dbReference>
<dbReference type="Proteomes" id="UP000694723">
    <property type="component" value="Unplaced"/>
</dbReference>
<dbReference type="Proteomes" id="UP000694724">
    <property type="component" value="Unplaced"/>
</dbReference>
<dbReference type="Proteomes" id="UP000694725">
    <property type="component" value="Unplaced"/>
</dbReference>
<dbReference type="Proteomes" id="UP000694726">
    <property type="component" value="Unplaced"/>
</dbReference>
<dbReference type="Proteomes" id="UP000694727">
    <property type="component" value="Unplaced"/>
</dbReference>
<dbReference type="Proteomes" id="UP000694728">
    <property type="component" value="Unplaced"/>
</dbReference>
<dbReference type="GO" id="GO:0005576">
    <property type="term" value="C:extracellular region"/>
    <property type="evidence" value="ECO:0007669"/>
    <property type="project" value="UniProtKB-SubCell"/>
</dbReference>
<dbReference type="GO" id="GO:0004190">
    <property type="term" value="F:aspartic-type endopeptidase activity"/>
    <property type="evidence" value="ECO:0007669"/>
    <property type="project" value="UniProtKB-KW"/>
</dbReference>
<dbReference type="GO" id="GO:0007586">
    <property type="term" value="P:digestion"/>
    <property type="evidence" value="ECO:0007669"/>
    <property type="project" value="UniProtKB-KW"/>
</dbReference>
<dbReference type="GO" id="GO:0006508">
    <property type="term" value="P:proteolysis"/>
    <property type="evidence" value="ECO:0007669"/>
    <property type="project" value="UniProtKB-KW"/>
</dbReference>
<dbReference type="Gene3D" id="6.10.140.60">
    <property type="match status" value="1"/>
</dbReference>
<dbReference type="InterPro" id="IPR012848">
    <property type="entry name" value="Aspartic_peptidase_N"/>
</dbReference>
<dbReference type="InterPro" id="IPR033121">
    <property type="entry name" value="PEPTIDASE_A1"/>
</dbReference>
<dbReference type="InterPro" id="IPR021109">
    <property type="entry name" value="Peptidase_aspartic_dom_sf"/>
</dbReference>
<dbReference type="Pfam" id="PF07966">
    <property type="entry name" value="A1_Propeptide"/>
    <property type="match status" value="1"/>
</dbReference>
<dbReference type="SUPFAM" id="SSF50630">
    <property type="entry name" value="Acid proteases"/>
    <property type="match status" value="1"/>
</dbReference>
<dbReference type="PROSITE" id="PS51767">
    <property type="entry name" value="PEPTIDASE_A1"/>
    <property type="match status" value="1"/>
</dbReference>
<proteinExistence type="evidence at protein level"/>
<keyword id="KW-0064">Aspartyl protease</keyword>
<keyword id="KW-0222">Digestion</keyword>
<keyword id="KW-0903">Direct protein sequencing</keyword>
<keyword id="KW-0378">Hydrolase</keyword>
<keyword id="KW-0645">Protease</keyword>
<keyword id="KW-1185">Reference proteome</keyword>
<keyword id="KW-0964">Secreted</keyword>
<keyword id="KW-0865">Zymogen</keyword>
<feature type="propeptide" id="PRO_0000026065" description="Activation peptide">
    <location>
        <begin position="1"/>
        <end position="43"/>
    </location>
</feature>
<feature type="chain" id="PRO_0000026066" description="Gastricsin">
    <location>
        <begin position="44"/>
        <end position="73" status="greater than"/>
    </location>
</feature>
<feature type="domain" description="Peptidase A1" evidence="1">
    <location>
        <begin position="57"/>
        <end position="73" status="greater than"/>
    </location>
</feature>
<feature type="non-terminal residue">
    <location>
        <position position="73"/>
    </location>
</feature>
<protein>
    <recommendedName>
        <fullName>Gastricsin</fullName>
        <ecNumber>3.4.23.3</ecNumber>
    </recommendedName>
    <alternativeName>
        <fullName>Pepsinogen C</fullName>
    </alternativeName>
</protein>
<evidence type="ECO:0000255" key="1">
    <source>
        <dbReference type="PROSITE-ProRule" id="PRU01103"/>
    </source>
</evidence>
<evidence type="ECO:0000305" key="2"/>
<reference key="1">
    <citation type="journal article" date="1992" name="Biochim. Biophys. Acta">
        <title>Separation of porcine pepsinogen A and progastricsin. Sequencing of the first 73 amino acid residues in progastricsin.</title>
        <authorList>
            <person name="Foltmann B."/>
            <person name="Drohse H.B."/>
            <person name="Nielsen P.K."/>
            <person name="James M.N.G."/>
        </authorList>
    </citation>
    <scope>PROTEIN SEQUENCE</scope>
</reference>
<gene>
    <name type="primary">PGC</name>
</gene>
<accession>P30879</accession>